<proteinExistence type="evidence at protein level"/>
<protein>
    <recommendedName>
        <fullName evidence="5">Telomerase-binding protein EST1A</fullName>
        <ecNumber>3.1.-.-</ecNumber>
    </recommendedName>
    <alternativeName>
        <fullName evidence="2">Ever shorter telomeres 1A</fullName>
    </alternativeName>
    <alternativeName>
        <fullName evidence="6">Nonsense mediated mRNA decay factor SMG6</fullName>
    </alternativeName>
    <alternativeName>
        <fullName evidence="2">Smg-6 homolog</fullName>
    </alternativeName>
</protein>
<evidence type="ECO:0000250" key="1"/>
<evidence type="ECO:0000250" key="2">
    <source>
        <dbReference type="UniProtKB" id="Q86US8"/>
    </source>
</evidence>
<evidence type="ECO:0000255" key="3"/>
<evidence type="ECO:0000256" key="4">
    <source>
        <dbReference type="SAM" id="MobiDB-lite"/>
    </source>
</evidence>
<evidence type="ECO:0000305" key="5"/>
<evidence type="ECO:0000312" key="6">
    <source>
        <dbReference type="MGI" id="MGI:2144117"/>
    </source>
</evidence>
<evidence type="ECO:0007744" key="7">
    <source>
    </source>
</evidence>
<evidence type="ECO:0007744" key="8">
    <source>
    </source>
</evidence>
<evidence type="ECO:0007744" key="9">
    <source>
    </source>
</evidence>
<feature type="chain" id="PRO_0000087070" description="Telomerase-binding protein EST1A">
    <location>
        <begin position="1"/>
        <end position="1418"/>
    </location>
</feature>
<feature type="domain" description="PINc">
    <location>
        <begin position="1245"/>
        <end position="1396"/>
    </location>
</feature>
<feature type="region of interest" description="Disordered" evidence="4">
    <location>
        <begin position="23"/>
        <end position="86"/>
    </location>
</feature>
<feature type="region of interest" description="EJC-binding motif 1; mediates interaction with the EJC" evidence="1">
    <location>
        <begin position="39"/>
        <end position="59"/>
    </location>
</feature>
<feature type="region of interest" description="Disordered" evidence="4">
    <location>
        <begin position="102"/>
        <end position="123"/>
    </location>
</feature>
<feature type="region of interest" description="EJC-binding motif 2; mediates interaction with the EJC" evidence="1">
    <location>
        <begin position="132"/>
        <end position="152"/>
    </location>
</feature>
<feature type="region of interest" description="Disordered" evidence="4">
    <location>
        <begin position="178"/>
        <end position="402"/>
    </location>
</feature>
<feature type="region of interest" description="Disordered" evidence="4">
    <location>
        <begin position="416"/>
        <end position="468"/>
    </location>
</feature>
<feature type="region of interest" description="Disordered" evidence="4">
    <location>
        <begin position="820"/>
        <end position="840"/>
    </location>
</feature>
<feature type="region of interest" description="Disordered" evidence="4">
    <location>
        <begin position="856"/>
        <end position="882"/>
    </location>
</feature>
<feature type="coiled-coil region" evidence="3">
    <location>
        <begin position="566"/>
        <end position="600"/>
    </location>
</feature>
<feature type="coiled-coil region" evidence="3">
    <location>
        <begin position="1196"/>
        <end position="1243"/>
    </location>
</feature>
<feature type="compositionally biased region" description="Basic and acidic residues" evidence="4">
    <location>
        <begin position="30"/>
        <end position="51"/>
    </location>
</feature>
<feature type="compositionally biased region" description="Basic and acidic residues" evidence="4">
    <location>
        <begin position="64"/>
        <end position="84"/>
    </location>
</feature>
<feature type="compositionally biased region" description="Polar residues" evidence="4">
    <location>
        <begin position="102"/>
        <end position="120"/>
    </location>
</feature>
<feature type="compositionally biased region" description="Basic and acidic residues" evidence="4">
    <location>
        <begin position="182"/>
        <end position="230"/>
    </location>
</feature>
<feature type="compositionally biased region" description="Low complexity" evidence="4">
    <location>
        <begin position="257"/>
        <end position="271"/>
    </location>
</feature>
<feature type="compositionally biased region" description="Basic residues" evidence="4">
    <location>
        <begin position="278"/>
        <end position="293"/>
    </location>
</feature>
<feature type="compositionally biased region" description="Acidic residues" evidence="4">
    <location>
        <begin position="302"/>
        <end position="312"/>
    </location>
</feature>
<feature type="compositionally biased region" description="Basic and acidic residues" evidence="4">
    <location>
        <begin position="336"/>
        <end position="347"/>
    </location>
</feature>
<feature type="compositionally biased region" description="Basic and acidic residues" evidence="4">
    <location>
        <begin position="367"/>
        <end position="379"/>
    </location>
</feature>
<feature type="compositionally biased region" description="Basic and acidic residues" evidence="4">
    <location>
        <begin position="387"/>
        <end position="402"/>
    </location>
</feature>
<feature type="compositionally biased region" description="Low complexity" evidence="4">
    <location>
        <begin position="417"/>
        <end position="426"/>
    </location>
</feature>
<feature type="compositionally biased region" description="Low complexity" evidence="4">
    <location>
        <begin position="436"/>
        <end position="445"/>
    </location>
</feature>
<feature type="compositionally biased region" description="Basic and acidic residues" evidence="4">
    <location>
        <begin position="820"/>
        <end position="834"/>
    </location>
</feature>
<feature type="binding site" evidence="1">
    <location>
        <position position="1250"/>
    </location>
    <ligand>
        <name>Mn(2+)</name>
        <dbReference type="ChEBI" id="CHEBI:29035"/>
        <note>catalytic</note>
    </ligand>
</feature>
<feature type="binding site" evidence="1">
    <location>
        <position position="1352"/>
    </location>
    <ligand>
        <name>Mn(2+)</name>
        <dbReference type="ChEBI" id="CHEBI:29035"/>
        <note>catalytic</note>
    </ligand>
</feature>
<feature type="binding site" evidence="1">
    <location>
        <position position="1391"/>
    </location>
    <ligand>
        <name>Mn(2+)</name>
        <dbReference type="ChEBI" id="CHEBI:29035"/>
        <note>catalytic</note>
    </ligand>
</feature>
<feature type="modified residue" description="Phosphoserine" evidence="7 8">
    <location>
        <position position="331"/>
    </location>
</feature>
<feature type="modified residue" description="Omega-N-methylarginine" evidence="9">
    <location>
        <position position="405"/>
    </location>
</feature>
<feature type="modified residue" description="Omega-N-methylarginine" evidence="9">
    <location>
        <position position="432"/>
    </location>
</feature>
<feature type="modified residue" description="Phosphothreonine" evidence="8">
    <location>
        <position position="470"/>
    </location>
</feature>
<feature type="modified residue" description="Phosphothreonine" evidence="2">
    <location>
        <position position="478"/>
    </location>
</feature>
<feature type="modified residue" description="Phosphoserine" evidence="2">
    <location>
        <position position="483"/>
    </location>
</feature>
<feature type="modified residue" description="Phosphoserine" evidence="2">
    <location>
        <position position="830"/>
    </location>
</feature>
<feature type="modified residue" description="Phosphoserine" evidence="8">
    <location>
        <position position="869"/>
    </location>
</feature>
<feature type="modified residue" description="Phosphoserine" evidence="8">
    <location>
        <position position="873"/>
    </location>
</feature>
<reference key="1">
    <citation type="journal article" date="2009" name="PLoS Biol.">
        <title>Lineage-specific biology revealed by a finished genome assembly of the mouse.</title>
        <authorList>
            <person name="Church D.M."/>
            <person name="Goodstadt L."/>
            <person name="Hillier L.W."/>
            <person name="Zody M.C."/>
            <person name="Goldstein S."/>
            <person name="She X."/>
            <person name="Bult C.J."/>
            <person name="Agarwala R."/>
            <person name="Cherry J.L."/>
            <person name="DiCuccio M."/>
            <person name="Hlavina W."/>
            <person name="Kapustin Y."/>
            <person name="Meric P."/>
            <person name="Maglott D."/>
            <person name="Birtle Z."/>
            <person name="Marques A.C."/>
            <person name="Graves T."/>
            <person name="Zhou S."/>
            <person name="Teague B."/>
            <person name="Potamousis K."/>
            <person name="Churas C."/>
            <person name="Place M."/>
            <person name="Herschleb J."/>
            <person name="Runnheim R."/>
            <person name="Forrest D."/>
            <person name="Amos-Landgraf J."/>
            <person name="Schwartz D.C."/>
            <person name="Cheng Z."/>
            <person name="Lindblad-Toh K."/>
            <person name="Eichler E.E."/>
            <person name="Ponting C.P."/>
        </authorList>
    </citation>
    <scope>NUCLEOTIDE SEQUENCE [LARGE SCALE GENOMIC DNA]</scope>
    <source>
        <strain>C57BL/6J</strain>
    </source>
</reference>
<reference key="2">
    <citation type="journal article" date="2004" name="Genome Res.">
        <title>The status, quality, and expansion of the NIH full-length cDNA project: the Mammalian Gene Collection (MGC).</title>
        <authorList>
            <consortium name="The MGC Project Team"/>
        </authorList>
    </citation>
    <scope>NUCLEOTIDE SEQUENCE [LARGE SCALE MRNA]</scope>
    <source>
        <strain>C57BL/6J</strain>
        <tissue>Brain</tissue>
        <tissue>Mammary tumor</tissue>
    </source>
</reference>
<reference key="3">
    <citation type="journal article" date="2003" name="DNA Res.">
        <title>Prediction of the coding sequences of mouse homologues of KIAA gene: III. The complete nucleotide sequences of 500 mouse KIAA-homologous cDNAs identified by screening of terminal sequences of cDNA clones randomly sampled from size-fractionated libraries.</title>
        <authorList>
            <person name="Okazaki N."/>
            <person name="Kikuno R."/>
            <person name="Ohara R."/>
            <person name="Inamoto S."/>
            <person name="Koseki H."/>
            <person name="Hiraoka S."/>
            <person name="Saga Y."/>
            <person name="Nagase T."/>
            <person name="Ohara O."/>
            <person name="Koga H."/>
        </authorList>
    </citation>
    <scope>NUCLEOTIDE SEQUENCE [LARGE SCALE MRNA] OF 447-1418</scope>
    <source>
        <tissue>Fetal brain</tissue>
    </source>
</reference>
<reference key="4">
    <citation type="journal article" date="2007" name="Proc. Natl. Acad. Sci. U.S.A.">
        <title>Large-scale phosphorylation analysis of mouse liver.</title>
        <authorList>
            <person name="Villen J."/>
            <person name="Beausoleil S.A."/>
            <person name="Gerber S.A."/>
            <person name="Gygi S.P."/>
        </authorList>
    </citation>
    <scope>PHOSPHORYLATION [LARGE SCALE ANALYSIS] AT SER-331</scope>
    <scope>IDENTIFICATION BY MASS SPECTROMETRY [LARGE SCALE ANALYSIS]</scope>
    <source>
        <tissue>Liver</tissue>
    </source>
</reference>
<reference key="5">
    <citation type="journal article" date="2010" name="Cell">
        <title>A tissue-specific atlas of mouse protein phosphorylation and expression.</title>
        <authorList>
            <person name="Huttlin E.L."/>
            <person name="Jedrychowski M.P."/>
            <person name="Elias J.E."/>
            <person name="Goswami T."/>
            <person name="Rad R."/>
            <person name="Beausoleil S.A."/>
            <person name="Villen J."/>
            <person name="Haas W."/>
            <person name="Sowa M.E."/>
            <person name="Gygi S.P."/>
        </authorList>
    </citation>
    <scope>PHOSPHORYLATION [LARGE SCALE ANALYSIS] AT SER-331; THR-470; SER-869 AND SER-873</scope>
    <scope>IDENTIFICATION BY MASS SPECTROMETRY [LARGE SCALE ANALYSIS]</scope>
    <source>
        <tissue>Brain</tissue>
        <tissue>Kidney</tissue>
        <tissue>Pancreas</tissue>
        <tissue>Spleen</tissue>
        <tissue>Testis</tissue>
    </source>
</reference>
<reference key="6">
    <citation type="journal article" date="2014" name="Mol. Cell. Proteomics">
        <title>Immunoaffinity enrichment and mass spectrometry analysis of protein methylation.</title>
        <authorList>
            <person name="Guo A."/>
            <person name="Gu H."/>
            <person name="Zhou J."/>
            <person name="Mulhern D."/>
            <person name="Wang Y."/>
            <person name="Lee K.A."/>
            <person name="Yang V."/>
            <person name="Aguiar M."/>
            <person name="Kornhauser J."/>
            <person name="Jia X."/>
            <person name="Ren J."/>
            <person name="Beausoleil S.A."/>
            <person name="Silva J.C."/>
            <person name="Vemulapalli V."/>
            <person name="Bedford M.T."/>
            <person name="Comb M.J."/>
        </authorList>
    </citation>
    <scope>METHYLATION [LARGE SCALE ANALYSIS] AT ARG-405 AND ARG-432</scope>
    <scope>IDENTIFICATION BY MASS SPECTROMETRY [LARGE SCALE ANALYSIS]</scope>
    <source>
        <tissue>Embryo</tissue>
    </source>
</reference>
<keyword id="KW-0158">Chromosome</keyword>
<keyword id="KW-0175">Coiled coil</keyword>
<keyword id="KW-0963">Cytoplasm</keyword>
<keyword id="KW-0238">DNA-binding</keyword>
<keyword id="KW-0255">Endonuclease</keyword>
<keyword id="KW-0378">Hydrolase</keyword>
<keyword id="KW-0464">Manganese</keyword>
<keyword id="KW-0479">Metal-binding</keyword>
<keyword id="KW-0488">Methylation</keyword>
<keyword id="KW-0866">Nonsense-mediated mRNA decay</keyword>
<keyword id="KW-0540">Nuclease</keyword>
<keyword id="KW-0539">Nucleus</keyword>
<keyword id="KW-0597">Phosphoprotein</keyword>
<keyword id="KW-1185">Reference proteome</keyword>
<keyword id="KW-0779">Telomere</keyword>
<comment type="function">
    <text evidence="2">Component of the telomerase ribonucleoprotein (RNP) complex that is essential for the replication of chromosome termini. May have a general role in telomere regulation. Promotes in vitro the ability of TERT to elongate telomeres. Overexpression induces telomere uncapping, chromosomal end-to-end fusions (telomeric DNA persists at the fusion points) and did not perturb TRF2 telomeric localization. Binds to the single-stranded 5'-(GTGTGG)(4)GTGT-3' telomeric DNA, but not to a telomerase RNA template component (TER).</text>
</comment>
<comment type="function">
    <text evidence="2">Plays a role in nonsense-mediated mRNA decay. Is thought to provide a link to the mRNA degradation machinery as it has endonuclease activity required to initiate NMD, and to serve as an adapter for UPF1 to protein phosphatase 2A (PP2A), thereby triggering UPF1 dephosphorylation. Degrades single-stranded RNA (ssRNA), but not ssDNA or dsRNA.</text>
</comment>
<comment type="cofactor">
    <cofactor>
        <name>Mn(2+)</name>
        <dbReference type="ChEBI" id="CHEBI:29035"/>
    </cofactor>
</comment>
<comment type="subunit">
    <text evidence="2">May form homooligomers. Associated component of the telomerase holoenzyme complex. Interacts with TERT, independently of the telomerase RNA. Interacts with SMG1, SMG5, SMG7, UPF1, UPF2, UPF3B and the PP2A catalytic subunits. Also interacts with the exon junction complex (EJC) composed at least of CASC3, EIF4A3, MAGOH and RBM8A; required for the process of nonsense-mediated mRNA decay. Interacts with DHX34; the interaction is RNA-independent (By similarity).</text>
</comment>
<comment type="subcellular location">
    <subcellularLocation>
        <location evidence="2">Nucleus</location>
        <location evidence="2">Nucleolus</location>
    </subcellularLocation>
    <subcellularLocation>
        <location evidence="2">Chromosome</location>
        <location evidence="2">Telomere</location>
    </subcellularLocation>
    <subcellularLocation>
        <location evidence="2">Cytoplasm</location>
        <location evidence="2">Cytosol</location>
    </subcellularLocation>
    <text evidence="2">Particularly enriched in the nucleolus.</text>
</comment>
<comment type="domain">
    <text evidence="2">The PINc domain confers endonuclease activity and is expected to bind the catalytic metal ion.</text>
</comment>
<name>EST1A_MOUSE</name>
<sequence length="1418" mass="160496">MAEGLERVRISASELRGILATLAPQAGSRENMKELKEPRQRKDNRRPDLEIYKPGLSRLRNRPKTKEASGNEEFKDEIVNDRDSSAVGNDTQLIQVCKELDSQQQNGPIDAENSQAQETFPKTVGLEDRSLKIIKRSKKPDLQIYQPGRRLQTITKESAGRADEEEILNQVEQLRIEEDECKGEAIKEEVNNKPDKTEIEKHQSNDRVRTAKGEKGKKIEKGEGSKKVADDSVPGKPGSVKRYSRSDKRRNRYRTCSTSSAGSNNSAEGAGLTDNGCRRRRQDRAKERPRLKKQVSLSSTDSLDEDRVDEPDVLGSRRSSERKKHLERNWSGCGEGEQKSNGKENRSALRVTFDAETMSKDSPVVRSVKDNVDRMKSDKGPSSGGKGSEKQELRHPRQELRDRGRGILILPAHTALSVSSSGSPESTPLGPRLLFGSGSKGSRSWGRGGTTRRLWDPNNPDQKPALKSQTPQLHFLDTDDEISPTSWGDSRQAQASYYKFQNSDNPYYYPRTPGPASQYPYAGYSPLQYPVGPTNGMYPGAYYPGYPAPSGQYVCSPLPASTMSPEEIEQHVRNMQQQELHRLLRVADNQELQLSNLLSRDRISTEGMEKMAQLRTELLQLYERCILLDIEFSDSQNVDQILWKNAFYQVIEKFRQLLKDPNSENPEQIRNRLLELLDEGSDFFDSLLQKLQVTYKFKLEDYMDGLAIRSKPLRKTVKYALISAQRSMICQGDISRYREQANDTANYGKARSWYLKAQHIAPKNGRPYNQLALLAVYTRRKLDAVYYYMRSLAASNPILTAKESLMSLFEETKRKAEQMEKKQHEEFDMSPDKWRKGKKSTFRHVGDDTTRLEIWIHPSHSRSAQGTESGKDSEQENGLGSLSPSDLNKRFILSFLHAHGKLFTRIGMETFPAVAEKVLKEFQVLLQHSPSPIGSTRMLQLMTINMFAVHNSQLKDCFSEECRSVIQEQAASLGLAMFSLLVQRCTCLLKDSAKAQLSSPEDQEDQDDIKVSSFVPDLKELLPSVKVWSDWMLGYPDTWNPPPTSLDLPLQVAVDVWSTLADFCNILTAVNQSEVPLYKDPDDDLTLLILEEDRLLSGFVPLLAAPQDPCYVEKTSDKVIAADCKRVTVLKYFLEALCGQEEPLLAFKGGKYVSVAPVPDTMGKEMGSQEGKQLEDEEEDVVIEDFEEDSEAEGSGGEDDIRELRAKKLALARKIAEQQRRQEKIQAVLEDQSQMRQMELEIRPLFLVPDTNGFIDHLASLARLLESRKYILVVPLIVINELDGLAKGQETDHRAGGYARVVQEKARKSIEFLERRFESRDSCLRALTSRGNELESIAFRSEDITGQLGNNDDLILSCCLHYCKDKAKDYMPTSKEEPIRLLREVVLLTDDRNLRVKALTRNVPVRDIPAFLTWAQVG</sequence>
<dbReference type="EC" id="3.1.-.-"/>
<dbReference type="EMBL" id="AL603905">
    <property type="status" value="NOT_ANNOTATED_CDS"/>
    <property type="molecule type" value="Genomic_DNA"/>
</dbReference>
<dbReference type="EMBL" id="AL604066">
    <property type="status" value="NOT_ANNOTATED_CDS"/>
    <property type="molecule type" value="Genomic_DNA"/>
</dbReference>
<dbReference type="EMBL" id="AL662892">
    <property type="status" value="NOT_ANNOTATED_CDS"/>
    <property type="molecule type" value="Genomic_DNA"/>
</dbReference>
<dbReference type="EMBL" id="BC066040">
    <property type="protein sequence ID" value="AAH66040.1"/>
    <property type="molecule type" value="mRNA"/>
</dbReference>
<dbReference type="EMBL" id="AK129203">
    <property type="protein sequence ID" value="BAC98013.1"/>
    <property type="molecule type" value="mRNA"/>
</dbReference>
<dbReference type="CCDS" id="CCDS25039.1"/>
<dbReference type="RefSeq" id="NP_001002764.1">
    <property type="nucleotide sequence ID" value="NM_001002764.2"/>
</dbReference>
<dbReference type="SMR" id="P61406"/>
<dbReference type="BioGRID" id="222140">
    <property type="interactions" value="5"/>
</dbReference>
<dbReference type="FunCoup" id="P61406">
    <property type="interactions" value="4917"/>
</dbReference>
<dbReference type="IntAct" id="P61406">
    <property type="interactions" value="1"/>
</dbReference>
<dbReference type="STRING" id="10090.ENSMUSP00000043555"/>
<dbReference type="GlyGen" id="P61406">
    <property type="glycosylation" value="1 site"/>
</dbReference>
<dbReference type="iPTMnet" id="P61406"/>
<dbReference type="PhosphoSitePlus" id="P61406"/>
<dbReference type="SwissPalm" id="P61406"/>
<dbReference type="jPOST" id="P61406"/>
<dbReference type="PaxDb" id="10090-ENSMUSP00000043555"/>
<dbReference type="PeptideAtlas" id="P61406"/>
<dbReference type="ProteomicsDB" id="275801"/>
<dbReference type="Pumba" id="P61406"/>
<dbReference type="Antibodypedia" id="50527">
    <property type="antibodies" value="67 antibodies from 14 providers"/>
</dbReference>
<dbReference type="Ensembl" id="ENSMUST00000045281.13">
    <property type="protein sequence ID" value="ENSMUSP00000043555.7"/>
    <property type="gene ID" value="ENSMUSG00000038290.16"/>
</dbReference>
<dbReference type="GeneID" id="103677"/>
<dbReference type="KEGG" id="mmu:103677"/>
<dbReference type="UCSC" id="uc007kcz.1">
    <property type="organism name" value="mouse"/>
</dbReference>
<dbReference type="AGR" id="MGI:2144117"/>
<dbReference type="CTD" id="23293"/>
<dbReference type="MGI" id="MGI:2144117">
    <property type="gene designation" value="Smg6"/>
</dbReference>
<dbReference type="VEuPathDB" id="HostDB:ENSMUSG00000038290"/>
<dbReference type="eggNOG" id="KOG2162">
    <property type="taxonomic scope" value="Eukaryota"/>
</dbReference>
<dbReference type="GeneTree" id="ENSGT00940000155300"/>
<dbReference type="HOGENOM" id="CLU_004735_0_0_1"/>
<dbReference type="InParanoid" id="P61406"/>
<dbReference type="OMA" id="CSPDVWQ"/>
<dbReference type="OrthoDB" id="2017974at2759"/>
<dbReference type="PhylomeDB" id="P61406"/>
<dbReference type="TreeFam" id="TF327119"/>
<dbReference type="Reactome" id="R-MMU-975957">
    <property type="pathway name" value="Nonsense Mediated Decay (NMD) enhanced by the Exon Junction Complex (EJC)"/>
</dbReference>
<dbReference type="BioGRID-ORCS" id="103677">
    <property type="hits" value="22 hits in 82 CRISPR screens"/>
</dbReference>
<dbReference type="CD-CODE" id="DE1E139C">
    <property type="entry name" value="Chromatoid body"/>
</dbReference>
<dbReference type="ChiTaRS" id="Smg6">
    <property type="organism name" value="mouse"/>
</dbReference>
<dbReference type="PRO" id="PR:P61406"/>
<dbReference type="Proteomes" id="UP000000589">
    <property type="component" value="Chromosome 11"/>
</dbReference>
<dbReference type="RNAct" id="P61406">
    <property type="molecule type" value="protein"/>
</dbReference>
<dbReference type="Bgee" id="ENSMUSG00000038290">
    <property type="expression patterns" value="Expressed in spermatid and 223 other cell types or tissues"/>
</dbReference>
<dbReference type="ExpressionAtlas" id="P61406">
    <property type="expression patterns" value="baseline and differential"/>
</dbReference>
<dbReference type="GO" id="GO:0000781">
    <property type="term" value="C:chromosome, telomeric region"/>
    <property type="evidence" value="ECO:0007669"/>
    <property type="project" value="UniProtKB-SubCell"/>
</dbReference>
<dbReference type="GO" id="GO:0036064">
    <property type="term" value="C:ciliary basal body"/>
    <property type="evidence" value="ECO:0007669"/>
    <property type="project" value="Ensembl"/>
</dbReference>
<dbReference type="GO" id="GO:0005737">
    <property type="term" value="C:cytoplasm"/>
    <property type="evidence" value="ECO:0000250"/>
    <property type="project" value="HGNC-UCL"/>
</dbReference>
<dbReference type="GO" id="GO:0005829">
    <property type="term" value="C:cytosol"/>
    <property type="evidence" value="ECO:0000250"/>
    <property type="project" value="UniProtKB"/>
</dbReference>
<dbReference type="GO" id="GO:0035145">
    <property type="term" value="C:exon-exon junction complex"/>
    <property type="evidence" value="ECO:0007669"/>
    <property type="project" value="Ensembl"/>
</dbReference>
<dbReference type="GO" id="GO:0005730">
    <property type="term" value="C:nucleolus"/>
    <property type="evidence" value="ECO:0007669"/>
    <property type="project" value="UniProtKB-SubCell"/>
</dbReference>
<dbReference type="GO" id="GO:0005634">
    <property type="term" value="C:nucleus"/>
    <property type="evidence" value="ECO:0000250"/>
    <property type="project" value="HGNC-UCL"/>
</dbReference>
<dbReference type="GO" id="GO:0005886">
    <property type="term" value="C:plasma membrane"/>
    <property type="evidence" value="ECO:0007669"/>
    <property type="project" value="Ensembl"/>
</dbReference>
<dbReference type="GO" id="GO:0070182">
    <property type="term" value="F:DNA polymerase binding"/>
    <property type="evidence" value="ECO:0007669"/>
    <property type="project" value="Ensembl"/>
</dbReference>
<dbReference type="GO" id="GO:0046872">
    <property type="term" value="F:metal ion binding"/>
    <property type="evidence" value="ECO:0007669"/>
    <property type="project" value="UniProtKB-KW"/>
</dbReference>
<dbReference type="GO" id="GO:0043021">
    <property type="term" value="F:ribonucleoprotein complex binding"/>
    <property type="evidence" value="ECO:0007669"/>
    <property type="project" value="Ensembl"/>
</dbReference>
<dbReference type="GO" id="GO:0004521">
    <property type="term" value="F:RNA endonuclease activity"/>
    <property type="evidence" value="ECO:0000250"/>
    <property type="project" value="UniProtKB"/>
</dbReference>
<dbReference type="GO" id="GO:0070034">
    <property type="term" value="F:telomerase RNA binding"/>
    <property type="evidence" value="ECO:0007669"/>
    <property type="project" value="Ensembl"/>
</dbReference>
<dbReference type="GO" id="GO:0042162">
    <property type="term" value="F:telomeric DNA binding"/>
    <property type="evidence" value="ECO:0000250"/>
    <property type="project" value="HGNC-UCL"/>
</dbReference>
<dbReference type="GO" id="GO:1904354">
    <property type="term" value="P:negative regulation of telomere capping"/>
    <property type="evidence" value="ECO:0007669"/>
    <property type="project" value="Ensembl"/>
</dbReference>
<dbReference type="GO" id="GO:0000184">
    <property type="term" value="P:nuclear-transcribed mRNA catabolic process, nonsense-mediated decay"/>
    <property type="evidence" value="ECO:0000250"/>
    <property type="project" value="UniProtKB"/>
</dbReference>
<dbReference type="GO" id="GO:0032204">
    <property type="term" value="P:regulation of telomere maintenance"/>
    <property type="evidence" value="ECO:0000250"/>
    <property type="project" value="HGNC"/>
</dbReference>
<dbReference type="CDD" id="cd09885">
    <property type="entry name" value="PIN_Smg6-like"/>
    <property type="match status" value="1"/>
</dbReference>
<dbReference type="FunFam" id="1.25.40.10:FF:000094">
    <property type="entry name" value="telomerase-binding protein EST1A isoform X1"/>
    <property type="match status" value="1"/>
</dbReference>
<dbReference type="FunFam" id="3.40.50.1010:FF:000014">
    <property type="entry name" value="telomerase-binding protein EST1A isoform X1"/>
    <property type="match status" value="1"/>
</dbReference>
<dbReference type="Gene3D" id="3.40.50.1010">
    <property type="entry name" value="5'-nuclease"/>
    <property type="match status" value="1"/>
</dbReference>
<dbReference type="Gene3D" id="1.25.40.10">
    <property type="entry name" value="Tetratricopeptide repeat domain"/>
    <property type="match status" value="1"/>
</dbReference>
<dbReference type="InterPro" id="IPR018834">
    <property type="entry name" value="DNA/RNA-bd_Est1-type"/>
</dbReference>
<dbReference type="InterPro" id="IPR019458">
    <property type="entry name" value="Est1-like_N"/>
</dbReference>
<dbReference type="InterPro" id="IPR045153">
    <property type="entry name" value="Est1/Ebs1-like"/>
</dbReference>
<dbReference type="InterPro" id="IPR029060">
    <property type="entry name" value="PIN-like_dom_sf"/>
</dbReference>
<dbReference type="InterPro" id="IPR002716">
    <property type="entry name" value="PIN_dom"/>
</dbReference>
<dbReference type="InterPro" id="IPR011990">
    <property type="entry name" value="TPR-like_helical_dom_sf"/>
</dbReference>
<dbReference type="PANTHER" id="PTHR15696">
    <property type="entry name" value="SMG-7 SUPPRESSOR WITH MORPHOLOGICAL EFFECT ON GENITALIA PROTEIN 7"/>
    <property type="match status" value="1"/>
</dbReference>
<dbReference type="PANTHER" id="PTHR15696:SF0">
    <property type="entry name" value="TELOMERASE-BINDING PROTEIN EST1A"/>
    <property type="match status" value="1"/>
</dbReference>
<dbReference type="Pfam" id="PF10374">
    <property type="entry name" value="EST1"/>
    <property type="match status" value="1"/>
</dbReference>
<dbReference type="Pfam" id="PF10373">
    <property type="entry name" value="EST1_DNA_bind"/>
    <property type="match status" value="1"/>
</dbReference>
<dbReference type="Pfam" id="PF13638">
    <property type="entry name" value="PIN_4"/>
    <property type="match status" value="1"/>
</dbReference>
<dbReference type="SMART" id="SM00670">
    <property type="entry name" value="PINc"/>
    <property type="match status" value="1"/>
</dbReference>
<dbReference type="SUPFAM" id="SSF88723">
    <property type="entry name" value="PIN domain-like"/>
    <property type="match status" value="1"/>
</dbReference>
<dbReference type="SUPFAM" id="SSF48452">
    <property type="entry name" value="TPR-like"/>
    <property type="match status" value="1"/>
</dbReference>
<gene>
    <name evidence="6" type="primary">Smg6</name>
    <name evidence="2" type="synonym">Est1a</name>
    <name evidence="2" type="synonym">Kiaa0732</name>
</gene>
<organism>
    <name type="scientific">Mus musculus</name>
    <name type="common">Mouse</name>
    <dbReference type="NCBI Taxonomy" id="10090"/>
    <lineage>
        <taxon>Eukaryota</taxon>
        <taxon>Metazoa</taxon>
        <taxon>Chordata</taxon>
        <taxon>Craniata</taxon>
        <taxon>Vertebrata</taxon>
        <taxon>Euteleostomi</taxon>
        <taxon>Mammalia</taxon>
        <taxon>Eutheria</taxon>
        <taxon>Euarchontoglires</taxon>
        <taxon>Glires</taxon>
        <taxon>Rodentia</taxon>
        <taxon>Myomorpha</taxon>
        <taxon>Muroidea</taxon>
        <taxon>Muridae</taxon>
        <taxon>Murinae</taxon>
        <taxon>Mus</taxon>
        <taxon>Mus</taxon>
    </lineage>
</organism>
<accession>P61406</accession>
<accession>Q5NC64</accession>